<organism>
    <name type="scientific">Homo sapiens</name>
    <name type="common">Human</name>
    <dbReference type="NCBI Taxonomy" id="9606"/>
    <lineage>
        <taxon>Eukaryota</taxon>
        <taxon>Metazoa</taxon>
        <taxon>Chordata</taxon>
        <taxon>Craniata</taxon>
        <taxon>Vertebrata</taxon>
        <taxon>Euteleostomi</taxon>
        <taxon>Mammalia</taxon>
        <taxon>Eutheria</taxon>
        <taxon>Euarchontoglires</taxon>
        <taxon>Primates</taxon>
        <taxon>Haplorrhini</taxon>
        <taxon>Catarrhini</taxon>
        <taxon>Hominidae</taxon>
        <taxon>Homo</taxon>
    </lineage>
</organism>
<accession>Q9Y2L6</accession>
<accession>Q8TAI3</accession>
<comment type="function">
    <text evidence="1">Member of GRP1 signaling complexes that are acutely recruited to plasma membrane ruffles in response to insulin receptor signaling. May function as a scaffolding protein that regulates epithelial cell polarity by connecting ARF6 activation with the PAR3 complex. Plays a redundant role with FRMD4A in epithelial polarization.</text>
</comment>
<comment type="subunit">
    <text evidence="1">Interacts with CYTH3 (By similarity). Interacts with PARD3 (By similarity). Interacts with CYTH1 (By similarity).</text>
</comment>
<comment type="subcellular location">
    <subcellularLocation>
        <location evidence="1">Cytoplasm</location>
        <location evidence="1">Cytoskeleton</location>
    </subcellularLocation>
    <subcellularLocation>
        <location evidence="1">Cell junction</location>
        <location evidence="1">Tight junction</location>
    </subcellularLocation>
    <subcellularLocation>
        <location evidence="1">Cell junction</location>
        <location evidence="1">Adherens junction</location>
    </subcellularLocation>
    <text evidence="1">Colocalized with PARD3 at adherens junction and tight junction.</text>
</comment>
<comment type="alternative products">
    <event type="alternative splicing"/>
    <isoform>
        <id>Q9Y2L6-1</id>
        <name>1</name>
        <sequence type="displayed"/>
    </isoform>
    <isoform>
        <id>Q9Y2L6-2</id>
        <name>2</name>
        <sequence type="described" ref="VSP_040895"/>
    </isoform>
</comment>
<comment type="sequence caution" evidence="6">
    <conflict type="erroneous initiation">
        <sequence resource="EMBL-CDS" id="BAA76857"/>
    </conflict>
    <text>Extended N-terminus.</text>
</comment>
<gene>
    <name evidence="7" type="primary">FRMD4B</name>
    <name evidence="7" type="synonym">GRSP1</name>
    <name type="synonym">KIAA1013</name>
</gene>
<keyword id="KW-0025">Alternative splicing</keyword>
<keyword id="KW-0965">Cell junction</keyword>
<keyword id="KW-0175">Coiled coil</keyword>
<keyword id="KW-0963">Cytoplasm</keyword>
<keyword id="KW-0206">Cytoskeleton</keyword>
<keyword id="KW-1017">Isopeptide bond</keyword>
<keyword id="KW-0597">Phosphoprotein</keyword>
<keyword id="KW-1267">Proteomics identification</keyword>
<keyword id="KW-1185">Reference proteome</keyword>
<keyword id="KW-0796">Tight junction</keyword>
<keyword id="KW-0832">Ubl conjugation</keyword>
<feature type="chain" id="PRO_0000219446" description="FERM domain-containing protein 4B">
    <location>
        <begin position="1"/>
        <end position="1034"/>
    </location>
</feature>
<feature type="domain" description="FERM" evidence="3">
    <location>
        <begin position="59"/>
        <end position="361"/>
    </location>
</feature>
<feature type="region of interest" description="Necessary for adherens junction and tight junction localization" evidence="1">
    <location>
        <begin position="542"/>
        <end position="971"/>
    </location>
</feature>
<feature type="region of interest" description="Disordered" evidence="4">
    <location>
        <begin position="576"/>
        <end position="614"/>
    </location>
</feature>
<feature type="region of interest" description="Disordered" evidence="4">
    <location>
        <begin position="635"/>
        <end position="698"/>
    </location>
</feature>
<feature type="region of interest" description="Disordered" evidence="4">
    <location>
        <begin position="712"/>
        <end position="735"/>
    </location>
</feature>
<feature type="region of interest" description="Disordered" evidence="4">
    <location>
        <begin position="752"/>
        <end position="786"/>
    </location>
</feature>
<feature type="region of interest" description="Disordered" evidence="4">
    <location>
        <begin position="905"/>
        <end position="925"/>
    </location>
</feature>
<feature type="region of interest" description="Disordered" evidence="4">
    <location>
        <begin position="1004"/>
        <end position="1034"/>
    </location>
</feature>
<feature type="coiled-coil region" evidence="2">
    <location>
        <begin position="417"/>
        <end position="450"/>
    </location>
</feature>
<feature type="coiled-coil region" evidence="2">
    <location>
        <begin position="531"/>
        <end position="561"/>
    </location>
</feature>
<feature type="compositionally biased region" description="Low complexity" evidence="4">
    <location>
        <begin position="576"/>
        <end position="589"/>
    </location>
</feature>
<feature type="compositionally biased region" description="Polar residues" evidence="4">
    <location>
        <begin position="635"/>
        <end position="650"/>
    </location>
</feature>
<feature type="compositionally biased region" description="Polar residues" evidence="4">
    <location>
        <begin position="663"/>
        <end position="674"/>
    </location>
</feature>
<feature type="compositionally biased region" description="Low complexity" evidence="4">
    <location>
        <begin position="675"/>
        <end position="685"/>
    </location>
</feature>
<feature type="compositionally biased region" description="Low complexity" evidence="4">
    <location>
        <begin position="713"/>
        <end position="722"/>
    </location>
</feature>
<feature type="compositionally biased region" description="Polar residues" evidence="4">
    <location>
        <begin position="769"/>
        <end position="781"/>
    </location>
</feature>
<feature type="compositionally biased region" description="Polar residues" evidence="4">
    <location>
        <begin position="906"/>
        <end position="920"/>
    </location>
</feature>
<feature type="compositionally biased region" description="Basic and acidic residues" evidence="4">
    <location>
        <begin position="1018"/>
        <end position="1034"/>
    </location>
</feature>
<feature type="modified residue" description="Phosphoserine" evidence="1">
    <location>
        <position position="372"/>
    </location>
</feature>
<feature type="modified residue" description="Phosphoserine" evidence="8">
    <location>
        <position position="608"/>
    </location>
</feature>
<feature type="modified residue" description="Phosphoserine" evidence="1">
    <location>
        <position position="697"/>
    </location>
</feature>
<feature type="modified residue" description="Phosphoserine" evidence="8">
    <location>
        <position position="915"/>
    </location>
</feature>
<feature type="cross-link" description="Glycyl lysine isopeptide (Lys-Gly) (interchain with G-Cter in SUMO2)" evidence="9">
    <location>
        <position position="882"/>
    </location>
</feature>
<feature type="cross-link" description="Glycyl lysine isopeptide (Lys-Gly) (interchain with G-Cter in SUMO2)" evidence="9">
    <location>
        <position position="1029"/>
    </location>
</feature>
<feature type="splice variant" id="VSP_040895" description="In isoform 2." evidence="5">
    <location>
        <begin position="1"/>
        <end position="54"/>
    </location>
</feature>
<feature type="sequence conflict" description="In Ref. 1; BAA76857." evidence="6" ref="1">
    <original>T</original>
    <variation>A</variation>
    <location>
        <position position="396"/>
    </location>
</feature>
<feature type="sequence conflict" description="In Ref. 1; BAA76857 and 4; AAH28291." evidence="6" ref="1 4">
    <original>S</original>
    <variation>L</variation>
    <location>
        <position position="947"/>
    </location>
</feature>
<protein>
    <recommendedName>
        <fullName>FERM domain-containing protein 4B</fullName>
    </recommendedName>
    <alternativeName>
        <fullName>GRP1-binding protein GRSP1</fullName>
    </alternativeName>
</protein>
<sequence length="1034" mass="118047">MASVFMCGVEDLLFSGSRFVWNLTVSTLRRWYTERLRACHQVLRTWCGLQDVYQMTEGRHCQVHLLDDRRLELLVQPKLLARELLDLVASHFNLKEKEYFGITFIDDTGQQNWLQLDHRVLDHDLPKKPGPTILHFAVRFYIESISFLKDKTTVELFFLNAKACVHKGQIEVESETIFKLAAFILQEAKGDYTSDENARKDLKTLPAFPTKTLQEHPSLAYCEDRVIEHYLKIKGLTRGQAVVQYMKIVEALPTYGVHYYAVKDKQGLPWWLGISYKGIGQYDIQDKVKPRKLFQWKQLENLYFREKKFAVEVHDPRRISVSRRTFGQSGLFVQTWYANSSLIKSIWVMAISQHQFYLDRKQSKAKIPSARSLDEIAMDLTETGTQRASKLVTLETKSQFIMASNGSLISSGSQDSEVSEEQKREKILELKKKEKLLQEKLLKKVEELKKICLREAELTGKMPKEYPLNIGEKPPQVRRRVGTAFKLDDNLLPSEEDPALQELESNFLIQQKLVEAAKKLANEPDLCKTVKKKRKQDYTDAMKKLQEIENAINEYRIRCGKKPSQKATVLPEDIIPSESSSLSDTTTYDDPSDAFTFPGQRSSSVPHSPRILPPKSLGIERIHFRKSSINEQFVDTRQSREMLSTHSSPYKTLERRPQGGRSMPTTPVLTRNAYSSSHLEPESSSQHCRQRSGSLESQSHLLSEMDSDKPFFSLSKSQRSSSTEILDDGSSYTSQSSTEYYCVTPVTGPYYTTQTLDTRTRGRRRSKKQNVSTSNSGSMPNLAQKDSLRNGVYSKSQEPPSSSYYIAGYTPYAECDFYYSGGYVYENDTEGQYSVNPSYRSSAHYGYERQRDYSRSFHEDEVDRVPHNPYATLRLPRKAAAKSEHITKNIHKALVAEHLRGWYQRASGQKDQGHSPQTSFDSDRGSQRCLGFAGLQVPCSPSSRASSYSSVSSTNASGNWRTQLTIGLSDYETPAHSSYTSCYGNVYNPLPSPSRQYTEISQLDGTDGNQLEDNLESSEQRLFWHEDSKPGTLV</sequence>
<name>FRM4B_HUMAN</name>
<evidence type="ECO:0000250" key="1">
    <source>
        <dbReference type="UniProtKB" id="Q920B0"/>
    </source>
</evidence>
<evidence type="ECO:0000255" key="2"/>
<evidence type="ECO:0000255" key="3">
    <source>
        <dbReference type="PROSITE-ProRule" id="PRU00084"/>
    </source>
</evidence>
<evidence type="ECO:0000256" key="4">
    <source>
        <dbReference type="SAM" id="MobiDB-lite"/>
    </source>
</evidence>
<evidence type="ECO:0000303" key="5">
    <source>
    </source>
</evidence>
<evidence type="ECO:0000305" key="6"/>
<evidence type="ECO:0000312" key="7">
    <source>
        <dbReference type="HGNC" id="HGNC:24886"/>
    </source>
</evidence>
<evidence type="ECO:0007744" key="8">
    <source>
    </source>
</evidence>
<evidence type="ECO:0007744" key="9">
    <source>
    </source>
</evidence>
<dbReference type="EMBL" id="AB023230">
    <property type="protein sequence ID" value="BAA76857.1"/>
    <property type="status" value="ALT_INIT"/>
    <property type="molecule type" value="mRNA"/>
</dbReference>
<dbReference type="EMBL" id="AC112221">
    <property type="status" value="NOT_ANNOTATED_CDS"/>
    <property type="molecule type" value="Genomic_DNA"/>
</dbReference>
<dbReference type="EMBL" id="AC135851">
    <property type="status" value="NOT_ANNOTATED_CDS"/>
    <property type="molecule type" value="Genomic_DNA"/>
</dbReference>
<dbReference type="EMBL" id="DA339318">
    <property type="status" value="NOT_ANNOTATED_CDS"/>
    <property type="molecule type" value="mRNA"/>
</dbReference>
<dbReference type="EMBL" id="BC028291">
    <property type="protein sequence ID" value="AAH28291.1"/>
    <property type="molecule type" value="mRNA"/>
</dbReference>
<dbReference type="CCDS" id="CCDS46863.1">
    <molecule id="Q9Y2L6-1"/>
</dbReference>
<dbReference type="RefSeq" id="NP_055938.2">
    <molecule id="Q9Y2L6-1"/>
    <property type="nucleotide sequence ID" value="NM_015123.3"/>
</dbReference>
<dbReference type="RefSeq" id="XP_016861482.1">
    <molecule id="Q9Y2L6-2"/>
    <property type="nucleotide sequence ID" value="XM_017005993.2"/>
</dbReference>
<dbReference type="RefSeq" id="XP_016861483.1">
    <molecule id="Q9Y2L6-2"/>
    <property type="nucleotide sequence ID" value="XM_017005994.2"/>
</dbReference>
<dbReference type="RefSeq" id="XP_047303725.1">
    <molecule id="Q9Y2L6-2"/>
    <property type="nucleotide sequence ID" value="XM_047447769.1"/>
</dbReference>
<dbReference type="RefSeq" id="XP_047303726.1">
    <molecule id="Q9Y2L6-2"/>
    <property type="nucleotide sequence ID" value="XM_047447770.1"/>
</dbReference>
<dbReference type="RefSeq" id="XP_047303727.1">
    <molecule id="Q9Y2L6-2"/>
    <property type="nucleotide sequence ID" value="XM_047447771.1"/>
</dbReference>
<dbReference type="SMR" id="Q9Y2L6"/>
<dbReference type="BioGRID" id="116765">
    <property type="interactions" value="93"/>
</dbReference>
<dbReference type="FunCoup" id="Q9Y2L6">
    <property type="interactions" value="93"/>
</dbReference>
<dbReference type="IntAct" id="Q9Y2L6">
    <property type="interactions" value="12"/>
</dbReference>
<dbReference type="STRING" id="9606.ENSP00000381549"/>
<dbReference type="GlyGen" id="Q9Y2L6">
    <property type="glycosylation" value="2 sites, 1 O-linked glycan (1 site)"/>
</dbReference>
<dbReference type="iPTMnet" id="Q9Y2L6"/>
<dbReference type="PhosphoSitePlus" id="Q9Y2L6"/>
<dbReference type="BioMuta" id="FRMD4B"/>
<dbReference type="DMDM" id="332278248"/>
<dbReference type="jPOST" id="Q9Y2L6"/>
<dbReference type="MassIVE" id="Q9Y2L6"/>
<dbReference type="PaxDb" id="9606-ENSP00000381549"/>
<dbReference type="PeptideAtlas" id="Q9Y2L6"/>
<dbReference type="ProteomicsDB" id="85836">
    <molecule id="Q9Y2L6-1"/>
</dbReference>
<dbReference type="ProteomicsDB" id="85837">
    <molecule id="Q9Y2L6-2"/>
</dbReference>
<dbReference type="Antibodypedia" id="2768">
    <property type="antibodies" value="39 antibodies from 8 providers"/>
</dbReference>
<dbReference type="DNASU" id="23150"/>
<dbReference type="Ensembl" id="ENST00000398540.8">
    <molecule id="Q9Y2L6-1"/>
    <property type="protein sequence ID" value="ENSP00000381549.3"/>
    <property type="gene ID" value="ENSG00000114541.15"/>
</dbReference>
<dbReference type="GeneID" id="23150"/>
<dbReference type="KEGG" id="hsa:23150"/>
<dbReference type="MANE-Select" id="ENST00000398540.8">
    <property type="protein sequence ID" value="ENSP00000381549.3"/>
    <property type="RefSeq nucleotide sequence ID" value="NM_015123.3"/>
    <property type="RefSeq protein sequence ID" value="NP_055938.2"/>
</dbReference>
<dbReference type="UCSC" id="uc003dnv.3">
    <molecule id="Q9Y2L6-1"/>
    <property type="organism name" value="human"/>
</dbReference>
<dbReference type="AGR" id="HGNC:24886"/>
<dbReference type="CTD" id="23150"/>
<dbReference type="DisGeNET" id="23150"/>
<dbReference type="GeneCards" id="FRMD4B"/>
<dbReference type="HGNC" id="HGNC:24886">
    <property type="gene designation" value="FRMD4B"/>
</dbReference>
<dbReference type="HPA" id="ENSG00000114541">
    <property type="expression patterns" value="Low tissue specificity"/>
</dbReference>
<dbReference type="MIM" id="617467">
    <property type="type" value="gene"/>
</dbReference>
<dbReference type="neXtProt" id="NX_Q9Y2L6"/>
<dbReference type="OpenTargets" id="ENSG00000114541"/>
<dbReference type="PharmGKB" id="PA128394605"/>
<dbReference type="VEuPathDB" id="HostDB:ENSG00000114541"/>
<dbReference type="eggNOG" id="KOG3529">
    <property type="taxonomic scope" value="Eukaryota"/>
</dbReference>
<dbReference type="GeneTree" id="ENSGT01020000230354"/>
<dbReference type="HOGENOM" id="CLU_003623_2_0_1"/>
<dbReference type="InParanoid" id="Q9Y2L6"/>
<dbReference type="OMA" id="RAPHNPY"/>
<dbReference type="OrthoDB" id="10063592at2759"/>
<dbReference type="PAN-GO" id="Q9Y2L6">
    <property type="GO annotations" value="2 GO annotations based on evolutionary models"/>
</dbReference>
<dbReference type="PhylomeDB" id="Q9Y2L6"/>
<dbReference type="TreeFam" id="TF328984"/>
<dbReference type="PathwayCommons" id="Q9Y2L6"/>
<dbReference type="SignaLink" id="Q9Y2L6"/>
<dbReference type="BioGRID-ORCS" id="23150">
    <property type="hits" value="10 hits in 1147 CRISPR screens"/>
</dbReference>
<dbReference type="ChiTaRS" id="FRMD4B">
    <property type="organism name" value="human"/>
</dbReference>
<dbReference type="GenomeRNAi" id="23150"/>
<dbReference type="Pharos" id="Q9Y2L6">
    <property type="development level" value="Tbio"/>
</dbReference>
<dbReference type="PRO" id="PR:Q9Y2L6"/>
<dbReference type="Proteomes" id="UP000005640">
    <property type="component" value="Chromosome 3"/>
</dbReference>
<dbReference type="RNAct" id="Q9Y2L6">
    <property type="molecule type" value="protein"/>
</dbReference>
<dbReference type="Bgee" id="ENSG00000114541">
    <property type="expression patterns" value="Expressed in germinal epithelium of ovary and 193 other cell types or tissues"/>
</dbReference>
<dbReference type="ExpressionAtlas" id="Q9Y2L6">
    <property type="expression patterns" value="baseline and differential"/>
</dbReference>
<dbReference type="GO" id="GO:0005912">
    <property type="term" value="C:adherens junction"/>
    <property type="evidence" value="ECO:0000318"/>
    <property type="project" value="GO_Central"/>
</dbReference>
<dbReference type="GO" id="GO:0005923">
    <property type="term" value="C:bicellular tight junction"/>
    <property type="evidence" value="ECO:0000318"/>
    <property type="project" value="GO_Central"/>
</dbReference>
<dbReference type="GO" id="GO:0005737">
    <property type="term" value="C:cytoplasm"/>
    <property type="evidence" value="ECO:0007669"/>
    <property type="project" value="UniProtKB-KW"/>
</dbReference>
<dbReference type="GO" id="GO:0005856">
    <property type="term" value="C:cytoskeleton"/>
    <property type="evidence" value="ECO:0007669"/>
    <property type="project" value="UniProtKB-SubCell"/>
</dbReference>
<dbReference type="GO" id="GO:0005615">
    <property type="term" value="C:extracellular space"/>
    <property type="evidence" value="ECO:0007005"/>
    <property type="project" value="UniProtKB"/>
</dbReference>
<dbReference type="GO" id="GO:0001726">
    <property type="term" value="C:ruffle"/>
    <property type="evidence" value="ECO:0007669"/>
    <property type="project" value="Ensembl"/>
</dbReference>
<dbReference type="GO" id="GO:0090162">
    <property type="term" value="P:establishment of epithelial cell polarity"/>
    <property type="evidence" value="ECO:0007669"/>
    <property type="project" value="Ensembl"/>
</dbReference>
<dbReference type="CDD" id="cd14473">
    <property type="entry name" value="FERM_B-lobe"/>
    <property type="match status" value="1"/>
</dbReference>
<dbReference type="CDD" id="cd13191">
    <property type="entry name" value="FERM_C_FRMD4A_FRMD4B"/>
    <property type="match status" value="1"/>
</dbReference>
<dbReference type="CDD" id="cd17200">
    <property type="entry name" value="FERM_F1_FRMD4B"/>
    <property type="match status" value="1"/>
</dbReference>
<dbReference type="FunFam" id="1.20.80.10:FF:000008">
    <property type="entry name" value="FERM domain containing 4A"/>
    <property type="match status" value="1"/>
</dbReference>
<dbReference type="FunFam" id="3.10.20.90:FF:000019">
    <property type="entry name" value="FERM domain containing 4A"/>
    <property type="match status" value="1"/>
</dbReference>
<dbReference type="FunFam" id="2.30.29.30:FF:000022">
    <property type="entry name" value="Putative FERM domain-containing protein 4A"/>
    <property type="match status" value="1"/>
</dbReference>
<dbReference type="Gene3D" id="1.20.80.10">
    <property type="match status" value="1"/>
</dbReference>
<dbReference type="Gene3D" id="3.10.20.90">
    <property type="entry name" value="Phosphatidylinositol 3-kinase Catalytic Subunit, Chain A, domain 1"/>
    <property type="match status" value="1"/>
</dbReference>
<dbReference type="Gene3D" id="2.30.29.30">
    <property type="entry name" value="Pleckstrin-homology domain (PH domain)/Phosphotyrosine-binding domain (PTB)"/>
    <property type="match status" value="1"/>
</dbReference>
<dbReference type="InterPro" id="IPR019749">
    <property type="entry name" value="Band_41_domain"/>
</dbReference>
<dbReference type="InterPro" id="IPR021774">
    <property type="entry name" value="CUPID"/>
</dbReference>
<dbReference type="InterPro" id="IPR014352">
    <property type="entry name" value="FERM/acyl-CoA-bd_prot_sf"/>
</dbReference>
<dbReference type="InterPro" id="IPR035963">
    <property type="entry name" value="FERM_2"/>
</dbReference>
<dbReference type="InterPro" id="IPR019748">
    <property type="entry name" value="FERM_central"/>
</dbReference>
<dbReference type="InterPro" id="IPR019747">
    <property type="entry name" value="FERM_CS"/>
</dbReference>
<dbReference type="InterPro" id="IPR000299">
    <property type="entry name" value="FERM_domain"/>
</dbReference>
<dbReference type="InterPro" id="IPR018979">
    <property type="entry name" value="FERM_N"/>
</dbReference>
<dbReference type="InterPro" id="IPR018980">
    <property type="entry name" value="FERM_PH-like_C"/>
</dbReference>
<dbReference type="InterPro" id="IPR047176">
    <property type="entry name" value="FRMD4A/B"/>
</dbReference>
<dbReference type="InterPro" id="IPR041785">
    <property type="entry name" value="FRMD4A/B_FERM_C"/>
</dbReference>
<dbReference type="InterPro" id="IPR011993">
    <property type="entry name" value="PH-like_dom_sf"/>
</dbReference>
<dbReference type="InterPro" id="IPR029071">
    <property type="entry name" value="Ubiquitin-like_domsf"/>
</dbReference>
<dbReference type="PANTHER" id="PTHR46079">
    <property type="entry name" value="FERM DOMAIN-CONTAINING PROTEIN 4"/>
    <property type="match status" value="1"/>
</dbReference>
<dbReference type="PANTHER" id="PTHR46079:SF1">
    <property type="entry name" value="FERM DOMAIN-CONTAINING PROTEIN 4B"/>
    <property type="match status" value="1"/>
</dbReference>
<dbReference type="Pfam" id="PF11819">
    <property type="entry name" value="CUPID"/>
    <property type="match status" value="1"/>
</dbReference>
<dbReference type="Pfam" id="PF09380">
    <property type="entry name" value="FERM_C"/>
    <property type="match status" value="1"/>
</dbReference>
<dbReference type="Pfam" id="PF00373">
    <property type="entry name" value="FERM_M"/>
    <property type="match status" value="1"/>
</dbReference>
<dbReference type="Pfam" id="PF09379">
    <property type="entry name" value="FERM_N"/>
    <property type="match status" value="1"/>
</dbReference>
<dbReference type="PRINTS" id="PR00935">
    <property type="entry name" value="BAND41"/>
</dbReference>
<dbReference type="SMART" id="SM00295">
    <property type="entry name" value="B41"/>
    <property type="match status" value="1"/>
</dbReference>
<dbReference type="SMART" id="SM01196">
    <property type="entry name" value="FERM_C"/>
    <property type="match status" value="1"/>
</dbReference>
<dbReference type="SUPFAM" id="SSF50729">
    <property type="entry name" value="PH domain-like"/>
    <property type="match status" value="1"/>
</dbReference>
<dbReference type="SUPFAM" id="SSF47031">
    <property type="entry name" value="Second domain of FERM"/>
    <property type="match status" value="1"/>
</dbReference>
<dbReference type="SUPFAM" id="SSF54236">
    <property type="entry name" value="Ubiquitin-like"/>
    <property type="match status" value="1"/>
</dbReference>
<dbReference type="PROSITE" id="PS00661">
    <property type="entry name" value="FERM_2"/>
    <property type="match status" value="1"/>
</dbReference>
<dbReference type="PROSITE" id="PS50057">
    <property type="entry name" value="FERM_3"/>
    <property type="match status" value="1"/>
</dbReference>
<reference key="1">
    <citation type="journal article" date="1999" name="DNA Res.">
        <title>Prediction of the coding sequences of unidentified human genes. XIII. The complete sequences of 100 new cDNA clones from brain which code for large proteins in vitro.</title>
        <authorList>
            <person name="Nagase T."/>
            <person name="Ishikawa K."/>
            <person name="Suyama M."/>
            <person name="Kikuno R."/>
            <person name="Hirosawa M."/>
            <person name="Miyajima N."/>
            <person name="Tanaka A."/>
            <person name="Kotani H."/>
            <person name="Nomura N."/>
            <person name="Ohara O."/>
        </authorList>
    </citation>
    <scope>NUCLEOTIDE SEQUENCE [LARGE SCALE MRNA] (ISOFORM 1)</scope>
    <source>
        <tissue>Brain</tissue>
    </source>
</reference>
<reference key="2">
    <citation type="journal article" date="2006" name="Nature">
        <title>The DNA sequence, annotation and analysis of human chromosome 3.</title>
        <authorList>
            <person name="Muzny D.M."/>
            <person name="Scherer S.E."/>
            <person name="Kaul R."/>
            <person name="Wang J."/>
            <person name="Yu J."/>
            <person name="Sudbrak R."/>
            <person name="Buhay C.J."/>
            <person name="Chen R."/>
            <person name="Cree A."/>
            <person name="Ding Y."/>
            <person name="Dugan-Rocha S."/>
            <person name="Gill R."/>
            <person name="Gunaratne P."/>
            <person name="Harris R.A."/>
            <person name="Hawes A.C."/>
            <person name="Hernandez J."/>
            <person name="Hodgson A.V."/>
            <person name="Hume J."/>
            <person name="Jackson A."/>
            <person name="Khan Z.M."/>
            <person name="Kovar-Smith C."/>
            <person name="Lewis L.R."/>
            <person name="Lozado R.J."/>
            <person name="Metzker M.L."/>
            <person name="Milosavljevic A."/>
            <person name="Miner G.R."/>
            <person name="Morgan M.B."/>
            <person name="Nazareth L.V."/>
            <person name="Scott G."/>
            <person name="Sodergren E."/>
            <person name="Song X.-Z."/>
            <person name="Steffen D."/>
            <person name="Wei S."/>
            <person name="Wheeler D.A."/>
            <person name="Wright M.W."/>
            <person name="Worley K.C."/>
            <person name="Yuan Y."/>
            <person name="Zhang Z."/>
            <person name="Adams C.Q."/>
            <person name="Ansari-Lari M.A."/>
            <person name="Ayele M."/>
            <person name="Brown M.J."/>
            <person name="Chen G."/>
            <person name="Chen Z."/>
            <person name="Clendenning J."/>
            <person name="Clerc-Blankenburg K.P."/>
            <person name="Chen R."/>
            <person name="Chen Z."/>
            <person name="Davis C."/>
            <person name="Delgado O."/>
            <person name="Dinh H.H."/>
            <person name="Dong W."/>
            <person name="Draper H."/>
            <person name="Ernst S."/>
            <person name="Fu G."/>
            <person name="Gonzalez-Garay M.L."/>
            <person name="Garcia D.K."/>
            <person name="Gillett W."/>
            <person name="Gu J."/>
            <person name="Hao B."/>
            <person name="Haugen E."/>
            <person name="Havlak P."/>
            <person name="He X."/>
            <person name="Hennig S."/>
            <person name="Hu S."/>
            <person name="Huang W."/>
            <person name="Jackson L.R."/>
            <person name="Jacob L.S."/>
            <person name="Kelly S.H."/>
            <person name="Kube M."/>
            <person name="Levy R."/>
            <person name="Li Z."/>
            <person name="Liu B."/>
            <person name="Liu J."/>
            <person name="Liu W."/>
            <person name="Lu J."/>
            <person name="Maheshwari M."/>
            <person name="Nguyen B.-V."/>
            <person name="Okwuonu G.O."/>
            <person name="Palmeiri A."/>
            <person name="Pasternak S."/>
            <person name="Perez L.M."/>
            <person name="Phelps K.A."/>
            <person name="Plopper F.J."/>
            <person name="Qiang B."/>
            <person name="Raymond C."/>
            <person name="Rodriguez R."/>
            <person name="Saenphimmachak C."/>
            <person name="Santibanez J."/>
            <person name="Shen H."/>
            <person name="Shen Y."/>
            <person name="Subramanian S."/>
            <person name="Tabor P.E."/>
            <person name="Verduzco D."/>
            <person name="Waldron L."/>
            <person name="Wang J."/>
            <person name="Wang J."/>
            <person name="Wang Q."/>
            <person name="Williams G.A."/>
            <person name="Wong G.K.-S."/>
            <person name="Yao Z."/>
            <person name="Zhang J."/>
            <person name="Zhang X."/>
            <person name="Zhao G."/>
            <person name="Zhou J."/>
            <person name="Zhou Y."/>
            <person name="Nelson D."/>
            <person name="Lehrach H."/>
            <person name="Reinhardt R."/>
            <person name="Naylor S.L."/>
            <person name="Yang H."/>
            <person name="Olson M."/>
            <person name="Weinstock G."/>
            <person name="Gibbs R.A."/>
        </authorList>
    </citation>
    <scope>NUCLEOTIDE SEQUENCE [LARGE SCALE GENOMIC DNA]</scope>
</reference>
<reference key="3">
    <citation type="journal article" date="2004" name="Nat. Genet.">
        <title>Complete sequencing and characterization of 21,243 full-length human cDNAs.</title>
        <authorList>
            <person name="Ota T."/>
            <person name="Suzuki Y."/>
            <person name="Nishikawa T."/>
            <person name="Otsuki T."/>
            <person name="Sugiyama T."/>
            <person name="Irie R."/>
            <person name="Wakamatsu A."/>
            <person name="Hayashi K."/>
            <person name="Sato H."/>
            <person name="Nagai K."/>
            <person name="Kimura K."/>
            <person name="Makita H."/>
            <person name="Sekine M."/>
            <person name="Obayashi M."/>
            <person name="Nishi T."/>
            <person name="Shibahara T."/>
            <person name="Tanaka T."/>
            <person name="Ishii S."/>
            <person name="Yamamoto J."/>
            <person name="Saito K."/>
            <person name="Kawai Y."/>
            <person name="Isono Y."/>
            <person name="Nakamura Y."/>
            <person name="Nagahari K."/>
            <person name="Murakami K."/>
            <person name="Yasuda T."/>
            <person name="Iwayanagi T."/>
            <person name="Wagatsuma M."/>
            <person name="Shiratori A."/>
            <person name="Sudo H."/>
            <person name="Hosoiri T."/>
            <person name="Kaku Y."/>
            <person name="Kodaira H."/>
            <person name="Kondo H."/>
            <person name="Sugawara M."/>
            <person name="Takahashi M."/>
            <person name="Kanda K."/>
            <person name="Yokoi T."/>
            <person name="Furuya T."/>
            <person name="Kikkawa E."/>
            <person name="Omura Y."/>
            <person name="Abe K."/>
            <person name="Kamihara K."/>
            <person name="Katsuta N."/>
            <person name="Sato K."/>
            <person name="Tanikawa M."/>
            <person name="Yamazaki M."/>
            <person name="Ninomiya K."/>
            <person name="Ishibashi T."/>
            <person name="Yamashita H."/>
            <person name="Murakawa K."/>
            <person name="Fujimori K."/>
            <person name="Tanai H."/>
            <person name="Kimata M."/>
            <person name="Watanabe M."/>
            <person name="Hiraoka S."/>
            <person name="Chiba Y."/>
            <person name="Ishida S."/>
            <person name="Ono Y."/>
            <person name="Takiguchi S."/>
            <person name="Watanabe S."/>
            <person name="Yosida M."/>
            <person name="Hotuta T."/>
            <person name="Kusano J."/>
            <person name="Kanehori K."/>
            <person name="Takahashi-Fujii A."/>
            <person name="Hara H."/>
            <person name="Tanase T.-O."/>
            <person name="Nomura Y."/>
            <person name="Togiya S."/>
            <person name="Komai F."/>
            <person name="Hara R."/>
            <person name="Takeuchi K."/>
            <person name="Arita M."/>
            <person name="Imose N."/>
            <person name="Musashino K."/>
            <person name="Yuuki H."/>
            <person name="Oshima A."/>
            <person name="Sasaki N."/>
            <person name="Aotsuka S."/>
            <person name="Yoshikawa Y."/>
            <person name="Matsunawa H."/>
            <person name="Ichihara T."/>
            <person name="Shiohata N."/>
            <person name="Sano S."/>
            <person name="Moriya S."/>
            <person name="Momiyama H."/>
            <person name="Satoh N."/>
            <person name="Takami S."/>
            <person name="Terashima Y."/>
            <person name="Suzuki O."/>
            <person name="Nakagawa S."/>
            <person name="Senoh A."/>
            <person name="Mizoguchi H."/>
            <person name="Goto Y."/>
            <person name="Shimizu F."/>
            <person name="Wakebe H."/>
            <person name="Hishigaki H."/>
            <person name="Watanabe T."/>
            <person name="Sugiyama A."/>
            <person name="Takemoto M."/>
            <person name="Kawakami B."/>
            <person name="Yamazaki M."/>
            <person name="Watanabe K."/>
            <person name="Kumagai A."/>
            <person name="Itakura S."/>
            <person name="Fukuzumi Y."/>
            <person name="Fujimori Y."/>
            <person name="Komiyama M."/>
            <person name="Tashiro H."/>
            <person name="Tanigami A."/>
            <person name="Fujiwara T."/>
            <person name="Ono T."/>
            <person name="Yamada K."/>
            <person name="Fujii Y."/>
            <person name="Ozaki K."/>
            <person name="Hirao M."/>
            <person name="Ohmori Y."/>
            <person name="Kawabata A."/>
            <person name="Hikiji T."/>
            <person name="Kobatake N."/>
            <person name="Inagaki H."/>
            <person name="Ikema Y."/>
            <person name="Okamoto S."/>
            <person name="Okitani R."/>
            <person name="Kawakami T."/>
            <person name="Noguchi S."/>
            <person name="Itoh T."/>
            <person name="Shigeta K."/>
            <person name="Senba T."/>
            <person name="Matsumura K."/>
            <person name="Nakajima Y."/>
            <person name="Mizuno T."/>
            <person name="Morinaga M."/>
            <person name="Sasaki M."/>
            <person name="Togashi T."/>
            <person name="Oyama M."/>
            <person name="Hata H."/>
            <person name="Watanabe M."/>
            <person name="Komatsu T."/>
            <person name="Mizushima-Sugano J."/>
            <person name="Satoh T."/>
            <person name="Shirai Y."/>
            <person name="Takahashi Y."/>
            <person name="Nakagawa K."/>
            <person name="Okumura K."/>
            <person name="Nagase T."/>
            <person name="Nomura N."/>
            <person name="Kikuchi H."/>
            <person name="Masuho Y."/>
            <person name="Yamashita R."/>
            <person name="Nakai K."/>
            <person name="Yada T."/>
            <person name="Nakamura Y."/>
            <person name="Ohara O."/>
            <person name="Isogai T."/>
            <person name="Sugano S."/>
        </authorList>
    </citation>
    <scope>NUCLEOTIDE SEQUENCE [LARGE SCALE MRNA] OF 1-222 (ISOFORM 2)</scope>
</reference>
<reference key="4">
    <citation type="journal article" date="2004" name="Genome Res.">
        <title>The status, quality, and expansion of the NIH full-length cDNA project: the Mammalian Gene Collection (MGC).</title>
        <authorList>
            <consortium name="The MGC Project Team"/>
        </authorList>
    </citation>
    <scope>NUCLEOTIDE SEQUENCE [LARGE SCALE MRNA] OF 780-1034 (ISOFORMS 1/2)</scope>
    <source>
        <tissue>Testis</tissue>
    </source>
</reference>
<reference key="5">
    <citation type="journal article" date="2008" name="J. Proteome Res.">
        <title>Phosphoproteome of resting human platelets.</title>
        <authorList>
            <person name="Zahedi R.P."/>
            <person name="Lewandrowski U."/>
            <person name="Wiesner J."/>
            <person name="Wortelkamp S."/>
            <person name="Moebius J."/>
            <person name="Schuetz C."/>
            <person name="Walter U."/>
            <person name="Gambaryan S."/>
            <person name="Sickmann A."/>
        </authorList>
    </citation>
    <scope>PHOSPHORYLATION [LARGE SCALE ANALYSIS] AT SER-608 AND SER-915</scope>
    <scope>IDENTIFICATION BY MASS SPECTROMETRY [LARGE SCALE ANALYSIS]</scope>
    <source>
        <tissue>Platelet</tissue>
    </source>
</reference>
<reference key="6">
    <citation type="journal article" date="2013" name="J. Proteome Res.">
        <title>Toward a comprehensive characterization of a human cancer cell phosphoproteome.</title>
        <authorList>
            <person name="Zhou H."/>
            <person name="Di Palma S."/>
            <person name="Preisinger C."/>
            <person name="Peng M."/>
            <person name="Polat A.N."/>
            <person name="Heck A.J."/>
            <person name="Mohammed S."/>
        </authorList>
    </citation>
    <scope>IDENTIFICATION BY MASS SPECTROMETRY [LARGE SCALE ANALYSIS]</scope>
    <source>
        <tissue>Cervix carcinoma</tissue>
    </source>
</reference>
<reference key="7">
    <citation type="journal article" date="2017" name="Nat. Struct. Mol. Biol.">
        <title>Site-specific mapping of the human SUMO proteome reveals co-modification with phosphorylation.</title>
        <authorList>
            <person name="Hendriks I.A."/>
            <person name="Lyon D."/>
            <person name="Young C."/>
            <person name="Jensen L.J."/>
            <person name="Vertegaal A.C."/>
            <person name="Nielsen M.L."/>
        </authorList>
    </citation>
    <scope>SUMOYLATION [LARGE SCALE ANALYSIS] AT LYS-882 AND LYS-1029</scope>
    <scope>IDENTIFICATION BY MASS SPECTROMETRY [LARGE SCALE ANALYSIS]</scope>
</reference>
<proteinExistence type="evidence at protein level"/>